<keyword id="KW-0349">Heme</keyword>
<keyword id="KW-0408">Iron</keyword>
<keyword id="KW-0472">Membrane</keyword>
<keyword id="KW-0479">Metal-binding</keyword>
<keyword id="KW-0503">Monooxygenase</keyword>
<keyword id="KW-0560">Oxidoreductase</keyword>
<keyword id="KW-1185">Reference proteome</keyword>
<keyword id="KW-0812">Transmembrane</keyword>
<keyword id="KW-1133">Transmembrane helix</keyword>
<evidence type="ECO:0000250" key="1"/>
<evidence type="ECO:0000255" key="2"/>
<evidence type="ECO:0000269" key="3">
    <source>
    </source>
</evidence>
<evidence type="ECO:0000305" key="4"/>
<accession>Q43257</accession>
<accession>O04990</accession>
<comment type="function">
    <text evidence="3">Catalyzes the conversion of indole to indolin-2-one.</text>
</comment>
<comment type="catalytic activity">
    <reaction evidence="3">
        <text>indole + reduced [NADPH--hemoprotein reductase] + O2 = indolin-2-one + oxidized [NADPH--hemoprotein reductase] + H2O + H(+)</text>
        <dbReference type="Rhea" id="RHEA:31899"/>
        <dbReference type="Rhea" id="RHEA-COMP:11964"/>
        <dbReference type="Rhea" id="RHEA-COMP:11965"/>
        <dbReference type="ChEBI" id="CHEBI:15377"/>
        <dbReference type="ChEBI" id="CHEBI:15378"/>
        <dbReference type="ChEBI" id="CHEBI:15379"/>
        <dbReference type="ChEBI" id="CHEBI:16881"/>
        <dbReference type="ChEBI" id="CHEBI:31697"/>
        <dbReference type="ChEBI" id="CHEBI:57618"/>
        <dbReference type="ChEBI" id="CHEBI:58210"/>
        <dbReference type="EC" id="1.14.14.153"/>
    </reaction>
</comment>
<comment type="cofactor">
    <cofactor evidence="1">
        <name>heme</name>
        <dbReference type="ChEBI" id="CHEBI:30413"/>
    </cofactor>
</comment>
<comment type="pathway">
    <text>Secondary metabolite biosynthesis; 2,4-dihydroxy-1,4-benzoxazin-3-one biosynthesis; 2,4-dihydroxy-1,4-benzoxazin-3-one from indoleglycerol phosphate: step 2/5.</text>
</comment>
<comment type="subcellular location">
    <subcellularLocation>
        <location evidence="4">Membrane</location>
        <topology evidence="4">Single-pass membrane protein</topology>
    </subcellularLocation>
</comment>
<comment type="similarity">
    <text evidence="4">Belongs to the cytochrome P450 family.</text>
</comment>
<organism>
    <name type="scientific">Zea mays</name>
    <name type="common">Maize</name>
    <dbReference type="NCBI Taxonomy" id="4577"/>
    <lineage>
        <taxon>Eukaryota</taxon>
        <taxon>Viridiplantae</taxon>
        <taxon>Streptophyta</taxon>
        <taxon>Embryophyta</taxon>
        <taxon>Tracheophyta</taxon>
        <taxon>Spermatophyta</taxon>
        <taxon>Magnoliopsida</taxon>
        <taxon>Liliopsida</taxon>
        <taxon>Poales</taxon>
        <taxon>Poaceae</taxon>
        <taxon>PACMAD clade</taxon>
        <taxon>Panicoideae</taxon>
        <taxon>Andropogonodae</taxon>
        <taxon>Andropogoneae</taxon>
        <taxon>Tripsacinae</taxon>
        <taxon>Zea</taxon>
    </lineage>
</organism>
<reference key="1">
    <citation type="journal article" date="1995" name="Mol. Gen. Genet.">
        <title>Expression of a cytochrome P450 gene family in maize.</title>
        <authorList>
            <person name="Frey M."/>
            <person name="Kliem R."/>
            <person name="Saedler H."/>
            <person name="Gierl A."/>
        </authorList>
    </citation>
    <scope>NUCLEOTIDE SEQUENCE [MRNA]</scope>
    <source>
        <strain>cv. CI31A</strain>
    </source>
</reference>
<reference key="2">
    <citation type="journal article" date="1997" name="Science">
        <title>Analysis of a chemical plant defense mechanism in grasses.</title>
        <authorList>
            <person name="Frey M."/>
            <person name="Chomet P."/>
            <person name="Glawischnig E."/>
            <person name="Stettner C."/>
            <person name="Grun S."/>
            <person name="Winklmair A."/>
            <person name="Eisenreich W."/>
            <person name="Bacher A."/>
            <person name="Meeley R.B."/>
            <person name="Briggs S.P."/>
            <person name="Simcox K."/>
            <person name="Gierl A."/>
        </authorList>
    </citation>
    <scope>NUCLEOTIDE SEQUENCE [GENOMIC DNA]</scope>
    <scope>FUNCTION</scope>
    <scope>CATALYTIC ACTIVITY</scope>
    <source>
        <strain>cv. CI31A</strain>
    </source>
</reference>
<name>C71C4_MAIZE</name>
<dbReference type="EC" id="1.14.14.153" evidence="3"/>
<dbReference type="EMBL" id="X81831">
    <property type="protein sequence ID" value="CAA57425.1"/>
    <property type="molecule type" value="mRNA"/>
</dbReference>
<dbReference type="EMBL" id="Y11368">
    <property type="protein sequence ID" value="CAA72196.1"/>
    <property type="molecule type" value="Genomic_DNA"/>
</dbReference>
<dbReference type="PIR" id="T03262">
    <property type="entry name" value="T03262"/>
</dbReference>
<dbReference type="SMR" id="Q43257"/>
<dbReference type="STRING" id="4577.Q43257"/>
<dbReference type="PaxDb" id="4577-GRMZM2G085661_P01"/>
<dbReference type="KEGG" id="ag:CAA72196"/>
<dbReference type="MaizeGDB" id="299155"/>
<dbReference type="eggNOG" id="KOG0156">
    <property type="taxonomic scope" value="Eukaryota"/>
</dbReference>
<dbReference type="InParanoid" id="Q43257"/>
<dbReference type="BioCyc" id="MetaCyc:MONOMER-10169"/>
<dbReference type="BRENDA" id="1.14.14.153">
    <property type="organism ID" value="6752"/>
</dbReference>
<dbReference type="UniPathway" id="UPA00872">
    <property type="reaction ID" value="UER00848"/>
</dbReference>
<dbReference type="Proteomes" id="UP000007305">
    <property type="component" value="Unplaced"/>
</dbReference>
<dbReference type="ExpressionAtlas" id="Q43257">
    <property type="expression patterns" value="baseline and differential"/>
</dbReference>
<dbReference type="GO" id="GO:0016020">
    <property type="term" value="C:membrane"/>
    <property type="evidence" value="ECO:0000318"/>
    <property type="project" value="GO_Central"/>
</dbReference>
<dbReference type="GO" id="GO:0020037">
    <property type="term" value="F:heme binding"/>
    <property type="evidence" value="ECO:0007669"/>
    <property type="project" value="InterPro"/>
</dbReference>
<dbReference type="GO" id="GO:0036190">
    <property type="term" value="F:indole-2-monooxygenase activity"/>
    <property type="evidence" value="ECO:0007669"/>
    <property type="project" value="UniProtKB-EC"/>
</dbReference>
<dbReference type="GO" id="GO:0005506">
    <property type="term" value="F:iron ion binding"/>
    <property type="evidence" value="ECO:0007669"/>
    <property type="project" value="InterPro"/>
</dbReference>
<dbReference type="GO" id="GO:0016709">
    <property type="term" value="F:oxidoreductase activity, acting on paired donors, with incorporation or reduction of molecular oxygen, NAD(P)H as one donor, and incorporation of one atom of oxygen"/>
    <property type="evidence" value="ECO:0000318"/>
    <property type="project" value="GO_Central"/>
</dbReference>
<dbReference type="CDD" id="cd11072">
    <property type="entry name" value="CYP71-like"/>
    <property type="match status" value="1"/>
</dbReference>
<dbReference type="FunFam" id="1.10.630.10:FF:000055">
    <property type="entry name" value="Cytochrome P450 71A26"/>
    <property type="match status" value="1"/>
</dbReference>
<dbReference type="Gene3D" id="1.10.630.10">
    <property type="entry name" value="Cytochrome P450"/>
    <property type="match status" value="1"/>
</dbReference>
<dbReference type="InterPro" id="IPR001128">
    <property type="entry name" value="Cyt_P450"/>
</dbReference>
<dbReference type="InterPro" id="IPR017972">
    <property type="entry name" value="Cyt_P450_CS"/>
</dbReference>
<dbReference type="InterPro" id="IPR002401">
    <property type="entry name" value="Cyt_P450_E_grp-I"/>
</dbReference>
<dbReference type="InterPro" id="IPR036396">
    <property type="entry name" value="Cyt_P450_sf"/>
</dbReference>
<dbReference type="PANTHER" id="PTHR47955">
    <property type="entry name" value="CYTOCHROME P450 FAMILY 71 PROTEIN"/>
    <property type="match status" value="1"/>
</dbReference>
<dbReference type="PANTHER" id="PTHR47955:SF14">
    <property type="entry name" value="OS01G0543600 PROTEIN"/>
    <property type="match status" value="1"/>
</dbReference>
<dbReference type="Pfam" id="PF00067">
    <property type="entry name" value="p450"/>
    <property type="match status" value="1"/>
</dbReference>
<dbReference type="PRINTS" id="PR00463">
    <property type="entry name" value="EP450I"/>
</dbReference>
<dbReference type="PRINTS" id="PR00385">
    <property type="entry name" value="P450"/>
</dbReference>
<dbReference type="SUPFAM" id="SSF48264">
    <property type="entry name" value="Cytochrome P450"/>
    <property type="match status" value="1"/>
</dbReference>
<dbReference type="PROSITE" id="PS00086">
    <property type="entry name" value="CYTOCHROME_P450"/>
    <property type="match status" value="1"/>
</dbReference>
<proteinExistence type="evidence at protein level"/>
<sequence>MAAQLHHALYELLHEAAAAQRALLLAIPFSLLLLPLLLRYLAASASASATKNDGAAPASDPDKLLSLLPSPPMKLPIIGHLHLMGDIPYVSLAALATRYGPDLMLLRLGAVPTVVVSSPRVAEAVLRTYDHVFSSRPRSLVSDIIMYGATDSCFAPYGDHFRKARKLVTVHLLNASKVRSQRPAREEEVRGALDRVRRAAAAREPVDMSELLHSFVNNLVCRAVSGKFSMEEGRNRLFRELTDINAGLLGGFHIQDYFPRLGRIELVRKVACAKTRRVRKRWDDLLDKLIDDHAARMATHQDEDDDKDFIYVLLSLQKEYGLTRDHIKAILIDMFEAGTDTSYMTLEFAMTELIRKPHLMKKLQEEVRRNVPAGQEMVTEDNLPGMTDLKAVIKETLRLHPPVPLLLPHYSLDACEVAGYTIPANTRVVVNAWALGRHSGYWERENEFVPERFLSGDVAGGVDLKPNEFQFLAFGSGRRMCPGVHSASATIEAMLSNLMYRFDWQLPAGMKAEDVDMTEVFGITVSRKEKLLLVPQAA</sequence>
<protein>
    <recommendedName>
        <fullName>indole-2-monooxygenase</fullName>
        <ecNumber evidence="3">1.14.14.153</ecNumber>
    </recommendedName>
    <alternativeName>
        <fullName>Cytochrome P450 71C4</fullName>
    </alternativeName>
    <alternativeName>
        <fullName>Protein benzoxazineless 2</fullName>
    </alternativeName>
</protein>
<gene>
    <name type="primary">CYP71C4</name>
    <name type="synonym">BX2</name>
</gene>
<feature type="chain" id="PRO_0000052116" description="indole-2-monooxygenase">
    <location>
        <begin position="1"/>
        <end position="538"/>
    </location>
</feature>
<feature type="transmembrane region" description="Helical" evidence="2">
    <location>
        <begin position="22"/>
        <end position="42"/>
    </location>
</feature>
<feature type="binding site" description="axial binding residue" evidence="1">
    <location>
        <position position="481"/>
    </location>
    <ligand>
        <name>heme</name>
        <dbReference type="ChEBI" id="CHEBI:30413"/>
    </ligand>
    <ligandPart>
        <name>Fe</name>
        <dbReference type="ChEBI" id="CHEBI:18248"/>
    </ligandPart>
</feature>